<accession>Q24255</accession>
<accession>Q9VX54</accession>
<evidence type="ECO:0000255" key="1">
    <source>
        <dbReference type="PROSITE-ProRule" id="PRU00108"/>
    </source>
</evidence>
<evidence type="ECO:0000256" key="2">
    <source>
        <dbReference type="SAM" id="MobiDB-lite"/>
    </source>
</evidence>
<evidence type="ECO:0000269" key="3">
    <source>
    </source>
</evidence>
<evidence type="ECO:0000269" key="4">
    <source>
    </source>
</evidence>
<evidence type="ECO:0000269" key="5">
    <source>
    </source>
</evidence>
<evidence type="ECO:0000269" key="6">
    <source>
    </source>
</evidence>
<evidence type="ECO:0000269" key="7">
    <source>
    </source>
</evidence>
<evidence type="ECO:0000269" key="8">
    <source>
    </source>
</evidence>
<evidence type="ECO:0000269" key="9">
    <source>
    </source>
</evidence>
<evidence type="ECO:0000305" key="10"/>
<evidence type="ECO:0000312" key="11">
    <source>
        <dbReference type="EMBL" id="AAL13538.1"/>
    </source>
</evidence>
<feature type="chain" id="PRO_0000048832" description="Homeobox protein B-H1">
    <location>
        <begin position="1"/>
        <end position="544"/>
    </location>
</feature>
<feature type="DNA-binding region" description="Homeobox" evidence="1">
    <location>
        <begin position="299"/>
        <end position="358"/>
    </location>
</feature>
<feature type="region of interest" description="Disordered" evidence="2">
    <location>
        <begin position="53"/>
        <end position="73"/>
    </location>
</feature>
<feature type="region of interest" description="Disordered" evidence="2">
    <location>
        <begin position="92"/>
        <end position="179"/>
    </location>
</feature>
<feature type="region of interest" description="Disordered" evidence="2">
    <location>
        <begin position="236"/>
        <end position="308"/>
    </location>
</feature>
<feature type="region of interest" description="Disordered" evidence="2">
    <location>
        <begin position="471"/>
        <end position="544"/>
    </location>
</feature>
<feature type="compositionally biased region" description="Low complexity" evidence="2">
    <location>
        <begin position="53"/>
        <end position="70"/>
    </location>
</feature>
<feature type="compositionally biased region" description="Basic residues" evidence="2">
    <location>
        <begin position="95"/>
        <end position="105"/>
    </location>
</feature>
<feature type="compositionally biased region" description="Low complexity" evidence="2">
    <location>
        <begin position="106"/>
        <end position="131"/>
    </location>
</feature>
<feature type="compositionally biased region" description="Basic residues" evidence="2">
    <location>
        <begin position="156"/>
        <end position="172"/>
    </location>
</feature>
<feature type="compositionally biased region" description="Acidic residues" evidence="2">
    <location>
        <begin position="247"/>
        <end position="262"/>
    </location>
</feature>
<feature type="compositionally biased region" description="Basic and acidic residues" evidence="2">
    <location>
        <begin position="266"/>
        <end position="282"/>
    </location>
</feature>
<feature type="compositionally biased region" description="Polar residues" evidence="2">
    <location>
        <begin position="283"/>
        <end position="293"/>
    </location>
</feature>
<feature type="compositionally biased region" description="Pro residues" evidence="2">
    <location>
        <begin position="476"/>
        <end position="485"/>
    </location>
</feature>
<feature type="compositionally biased region" description="Low complexity" evidence="2">
    <location>
        <begin position="492"/>
        <end position="506"/>
    </location>
</feature>
<feature type="compositionally biased region" description="Pro residues" evidence="2">
    <location>
        <begin position="507"/>
        <end position="516"/>
    </location>
</feature>
<feature type="sequence conflict" description="In Ref. 1; AAA28382." evidence="10" ref="1">
    <original>P</original>
    <variation>A</variation>
    <location>
        <position position="45"/>
    </location>
</feature>
<feature type="sequence conflict" description="In Ref. 1; AAA28382." evidence="10" ref="1">
    <original>A</original>
    <variation>E</variation>
    <location>
        <position position="66"/>
    </location>
</feature>
<feature type="sequence conflict" description="In Ref. 1; AAA28382." evidence="10" ref="1">
    <original>A</original>
    <variation>R</variation>
    <location>
        <position position="218"/>
    </location>
</feature>
<feature type="sequence conflict" description="In Ref. 1; AAA28382." evidence="10" ref="1">
    <location>
        <position position="412"/>
    </location>
</feature>
<feature type="sequence conflict" description="In Ref. 1; AAA28382." evidence="10" ref="1">
    <original>V</original>
    <variation>G</variation>
    <location>
        <position position="486"/>
    </location>
</feature>
<feature type="sequence conflict" description="In Ref. 1; AAA28382." evidence="10" ref="1">
    <original>A</original>
    <variation>R</variation>
    <location>
        <position position="504"/>
    </location>
</feature>
<dbReference type="EMBL" id="M73079">
    <property type="protein sequence ID" value="AAA28382.1"/>
    <property type="molecule type" value="Genomic_DNA"/>
</dbReference>
<dbReference type="EMBL" id="M73259">
    <property type="protein sequence ID" value="AAA28382.1"/>
    <property type="status" value="JOINED"/>
    <property type="molecule type" value="Genomic_DNA"/>
</dbReference>
<dbReference type="EMBL" id="M73078">
    <property type="protein sequence ID" value="AAA28382.1"/>
    <property type="status" value="JOINED"/>
    <property type="molecule type" value="Genomic_DNA"/>
</dbReference>
<dbReference type="EMBL" id="AE014298">
    <property type="protein sequence ID" value="AAF48726.1"/>
    <property type="molecule type" value="Genomic_DNA"/>
</dbReference>
<dbReference type="EMBL" id="AY058309">
    <property type="protein sequence ID" value="AAL13538.1"/>
    <property type="molecule type" value="mRNA"/>
</dbReference>
<dbReference type="PIR" id="B39369">
    <property type="entry name" value="B39369"/>
</dbReference>
<dbReference type="RefSeq" id="NP_523387.1">
    <property type="nucleotide sequence ID" value="NM_078663.3"/>
</dbReference>
<dbReference type="SMR" id="Q24255"/>
<dbReference type="BioGRID" id="59052">
    <property type="interactions" value="23"/>
</dbReference>
<dbReference type="DIP" id="DIP-19778N"/>
<dbReference type="FunCoup" id="Q24255">
    <property type="interactions" value="127"/>
</dbReference>
<dbReference type="IntAct" id="Q24255">
    <property type="interactions" value="8"/>
</dbReference>
<dbReference type="STRING" id="7227.FBpp0074204"/>
<dbReference type="GlyGen" id="Q24255">
    <property type="glycosylation" value="1 site"/>
</dbReference>
<dbReference type="PaxDb" id="7227-FBpp0074204"/>
<dbReference type="DNASU" id="32724"/>
<dbReference type="EnsemblMetazoa" id="FBtr0074430">
    <property type="protein sequence ID" value="FBpp0074204"/>
    <property type="gene ID" value="FBgn0011758"/>
</dbReference>
<dbReference type="GeneID" id="32724"/>
<dbReference type="KEGG" id="dme:Dmel_CG5529"/>
<dbReference type="AGR" id="FB:FBgn0011758"/>
<dbReference type="CTD" id="32724"/>
<dbReference type="FlyBase" id="FBgn0011758">
    <property type="gene designation" value="B-H1"/>
</dbReference>
<dbReference type="VEuPathDB" id="VectorBase:FBgn0011758"/>
<dbReference type="eggNOG" id="KOG0488">
    <property type="taxonomic scope" value="Eukaryota"/>
</dbReference>
<dbReference type="GeneTree" id="ENSGT00940000169370"/>
<dbReference type="HOGENOM" id="CLU_500856_0_0_1"/>
<dbReference type="InParanoid" id="Q24255"/>
<dbReference type="OMA" id="NIDIYYR"/>
<dbReference type="OrthoDB" id="6159439at2759"/>
<dbReference type="PhylomeDB" id="Q24255"/>
<dbReference type="BioGRID-ORCS" id="32724">
    <property type="hits" value="0 hits in 3 CRISPR screens"/>
</dbReference>
<dbReference type="GenomeRNAi" id="32724"/>
<dbReference type="PRO" id="PR:Q24255"/>
<dbReference type="Proteomes" id="UP000000803">
    <property type="component" value="Chromosome X"/>
</dbReference>
<dbReference type="Bgee" id="FBgn0011758">
    <property type="expression patterns" value="Expressed in tormogen cell in proboscis and 52 other cell types or tissues"/>
</dbReference>
<dbReference type="ExpressionAtlas" id="Q24255">
    <property type="expression patterns" value="baseline and differential"/>
</dbReference>
<dbReference type="GO" id="GO:0005634">
    <property type="term" value="C:nucleus"/>
    <property type="evidence" value="ECO:0000314"/>
    <property type="project" value="FlyBase"/>
</dbReference>
<dbReference type="GO" id="GO:0000981">
    <property type="term" value="F:DNA-binding transcription factor activity, RNA polymerase II-specific"/>
    <property type="evidence" value="ECO:0000315"/>
    <property type="project" value="FlyBase"/>
</dbReference>
<dbReference type="GO" id="GO:0000977">
    <property type="term" value="F:RNA polymerase II transcription regulatory region sequence-specific DNA binding"/>
    <property type="evidence" value="ECO:0000318"/>
    <property type="project" value="GO_Central"/>
</dbReference>
<dbReference type="GO" id="GO:0008407">
    <property type="term" value="P:chaeta morphogenesis"/>
    <property type="evidence" value="ECO:0000315"/>
    <property type="project" value="UniProtKB"/>
</dbReference>
<dbReference type="GO" id="GO:0001751">
    <property type="term" value="P:compound eye photoreceptor cell differentiation"/>
    <property type="evidence" value="ECO:0000315"/>
    <property type="project" value="FlyBase"/>
</dbReference>
<dbReference type="GO" id="GO:0008057">
    <property type="term" value="P:eye pigment granule organization"/>
    <property type="evidence" value="ECO:0000315"/>
    <property type="project" value="UniProtKB"/>
</dbReference>
<dbReference type="GO" id="GO:0007455">
    <property type="term" value="P:eye-antennal disc morphogenesis"/>
    <property type="evidence" value="ECO:0000315"/>
    <property type="project" value="UniProtKB"/>
</dbReference>
<dbReference type="GO" id="GO:0007479">
    <property type="term" value="P:leg disc proximal/distal pattern formation"/>
    <property type="evidence" value="ECO:0000315"/>
    <property type="project" value="UniProtKB"/>
</dbReference>
<dbReference type="GO" id="GO:0045892">
    <property type="term" value="P:negative regulation of DNA-templated transcription"/>
    <property type="evidence" value="ECO:0000315"/>
    <property type="project" value="FlyBase"/>
</dbReference>
<dbReference type="GO" id="GO:0000122">
    <property type="term" value="P:negative regulation of transcription by RNA polymerase II"/>
    <property type="evidence" value="ECO:0000315"/>
    <property type="project" value="FlyBase"/>
</dbReference>
<dbReference type="GO" id="GO:0006357">
    <property type="term" value="P:regulation of transcription by RNA polymerase II"/>
    <property type="evidence" value="ECO:0000318"/>
    <property type="project" value="GO_Central"/>
</dbReference>
<dbReference type="GO" id="GO:0008052">
    <property type="term" value="P:sensory organ boundary specification"/>
    <property type="evidence" value="ECO:0000315"/>
    <property type="project" value="UniProtKB"/>
</dbReference>
<dbReference type="GO" id="GO:0007601">
    <property type="term" value="P:visual perception"/>
    <property type="evidence" value="ECO:0007669"/>
    <property type="project" value="UniProtKB-KW"/>
</dbReference>
<dbReference type="CDD" id="cd00086">
    <property type="entry name" value="homeodomain"/>
    <property type="match status" value="1"/>
</dbReference>
<dbReference type="Gene3D" id="1.10.10.60">
    <property type="entry name" value="Homeodomain-like"/>
    <property type="match status" value="1"/>
</dbReference>
<dbReference type="InterPro" id="IPR001356">
    <property type="entry name" value="HD"/>
</dbReference>
<dbReference type="InterPro" id="IPR020479">
    <property type="entry name" value="HD_metazoa"/>
</dbReference>
<dbReference type="InterPro" id="IPR017970">
    <property type="entry name" value="Homeobox_CS"/>
</dbReference>
<dbReference type="InterPro" id="IPR009057">
    <property type="entry name" value="Homeodomain-like_sf"/>
</dbReference>
<dbReference type="InterPro" id="IPR052145">
    <property type="entry name" value="Mediator/Homeobox_domain"/>
</dbReference>
<dbReference type="PANTHER" id="PTHR24330:SF10">
    <property type="entry name" value="HOMEOBOX PROTEIN B-H1-RELATED"/>
    <property type="match status" value="1"/>
</dbReference>
<dbReference type="PANTHER" id="PTHR24330">
    <property type="entry name" value="HOMEOBOX PROTEIN BARH-LIKE"/>
    <property type="match status" value="1"/>
</dbReference>
<dbReference type="Pfam" id="PF00046">
    <property type="entry name" value="Homeodomain"/>
    <property type="match status" value="1"/>
</dbReference>
<dbReference type="PRINTS" id="PR00024">
    <property type="entry name" value="HOMEOBOX"/>
</dbReference>
<dbReference type="SMART" id="SM00389">
    <property type="entry name" value="HOX"/>
    <property type="match status" value="1"/>
</dbReference>
<dbReference type="SUPFAM" id="SSF46689">
    <property type="entry name" value="Homeodomain-like"/>
    <property type="match status" value="1"/>
</dbReference>
<dbReference type="PROSITE" id="PS00027">
    <property type="entry name" value="HOMEOBOX_1"/>
    <property type="match status" value="1"/>
</dbReference>
<dbReference type="PROSITE" id="PS50071">
    <property type="entry name" value="HOMEOBOX_2"/>
    <property type="match status" value="1"/>
</dbReference>
<sequence>MKDSMSILTQTPSEPNAAHPQLHHHLSTLQQQHHQHHLHYGLQPPAVAHSIHSTTTMSSGGSTTTASGIGKPNRSRFMINDILAGSAAAAFYKQQQHHQQLHHHNNNNNSGSSGGSSPAHSNNNNNINGDNCEASNVAGVGVLPSALHHPQPHPPTHPHTHPHALMHPHGKLGHFPPTAGGNGLNVAQYAAAMQQHYAAAAAAAAARNNAAAAAAAAAAAAAAGVAAPPVDGGVDGGVGLAPPAGGDLDDSSDYHEENEDCDSGNMDDHSVCSNGGKDDDGNSVKSGSTSDMSGLSKKQRKARTAFTDHQLQTLEKSFERQKYLSVQERQELAHKLDLSDCQVKTWYQNRRTKWKRQTAVGLELLAEAGNFAAFQRLYGGSPYLGAWPYAAAAGAAHGATPHTNIDIYYRQAAAAAAMQKPLPYNLYAGVPSVGVGVGVGVGPAPFSHLSASSSLSSLSSYYQSAAAAASAANPGGPHPVAPPPSVGGGSPPSGLVKPIPAHSASASPPPRPPSTPSPTLNPGSPPGRSVDSCSQSDDEDQIQV</sequence>
<name>BARH1_DROME</name>
<organism evidence="11">
    <name type="scientific">Drosophila melanogaster</name>
    <name type="common">Fruit fly</name>
    <dbReference type="NCBI Taxonomy" id="7227"/>
    <lineage>
        <taxon>Eukaryota</taxon>
        <taxon>Metazoa</taxon>
        <taxon>Ecdysozoa</taxon>
        <taxon>Arthropoda</taxon>
        <taxon>Hexapoda</taxon>
        <taxon>Insecta</taxon>
        <taxon>Pterygota</taxon>
        <taxon>Neoptera</taxon>
        <taxon>Endopterygota</taxon>
        <taxon>Diptera</taxon>
        <taxon>Brachycera</taxon>
        <taxon>Muscomorpha</taxon>
        <taxon>Ephydroidea</taxon>
        <taxon>Drosophilidae</taxon>
        <taxon>Drosophila</taxon>
        <taxon>Sophophora</taxon>
    </lineage>
</organism>
<protein>
    <recommendedName>
        <fullName>Homeobox protein B-H1</fullName>
    </recommendedName>
    <alternativeName>
        <fullName>Homeobox protein BarH1</fullName>
    </alternativeName>
</protein>
<reference evidence="10" key="1">
    <citation type="journal article" date="1991" name="Proc. Natl. Acad. Sci. U.S.A.">
        <title>Identification of a different-type homeobox gene, BarH1, possibly causing Bar (B) and Om(1D) mutations in Drosophila.</title>
        <authorList>
            <person name="Saigo K."/>
            <person name="Emori Y."/>
            <person name="Sone M."/>
            <person name="Akimaru H."/>
            <person name="Takayama E."/>
            <person name="Higashijima S."/>
            <person name="Ishimaru S."/>
            <person name="Kojima T."/>
        </authorList>
    </citation>
    <scope>NUCLEOTIDE SEQUENCE [GENOMIC DNA]</scope>
    <scope>TISSUE SPECIFICITY</scope>
    <scope>DEVELOPMENTAL STAGE</scope>
    <source>
        <strain evidence="9">Canton-S</strain>
    </source>
</reference>
<reference evidence="10" key="2">
    <citation type="journal article" date="2000" name="Science">
        <title>The genome sequence of Drosophila melanogaster.</title>
        <authorList>
            <person name="Adams M.D."/>
            <person name="Celniker S.E."/>
            <person name="Holt R.A."/>
            <person name="Evans C.A."/>
            <person name="Gocayne J.D."/>
            <person name="Amanatides P.G."/>
            <person name="Scherer S.E."/>
            <person name="Li P.W."/>
            <person name="Hoskins R.A."/>
            <person name="Galle R.F."/>
            <person name="George R.A."/>
            <person name="Lewis S.E."/>
            <person name="Richards S."/>
            <person name="Ashburner M."/>
            <person name="Henderson S.N."/>
            <person name="Sutton G.G."/>
            <person name="Wortman J.R."/>
            <person name="Yandell M.D."/>
            <person name="Zhang Q."/>
            <person name="Chen L.X."/>
            <person name="Brandon R.C."/>
            <person name="Rogers Y.-H.C."/>
            <person name="Blazej R.G."/>
            <person name="Champe M."/>
            <person name="Pfeiffer B.D."/>
            <person name="Wan K.H."/>
            <person name="Doyle C."/>
            <person name="Baxter E.G."/>
            <person name="Helt G."/>
            <person name="Nelson C.R."/>
            <person name="Miklos G.L.G."/>
            <person name="Abril J.F."/>
            <person name="Agbayani A."/>
            <person name="An H.-J."/>
            <person name="Andrews-Pfannkoch C."/>
            <person name="Baldwin D."/>
            <person name="Ballew R.M."/>
            <person name="Basu A."/>
            <person name="Baxendale J."/>
            <person name="Bayraktaroglu L."/>
            <person name="Beasley E.M."/>
            <person name="Beeson K.Y."/>
            <person name="Benos P.V."/>
            <person name="Berman B.P."/>
            <person name="Bhandari D."/>
            <person name="Bolshakov S."/>
            <person name="Borkova D."/>
            <person name="Botchan M.R."/>
            <person name="Bouck J."/>
            <person name="Brokstein P."/>
            <person name="Brottier P."/>
            <person name="Burtis K.C."/>
            <person name="Busam D.A."/>
            <person name="Butler H."/>
            <person name="Cadieu E."/>
            <person name="Center A."/>
            <person name="Chandra I."/>
            <person name="Cherry J.M."/>
            <person name="Cawley S."/>
            <person name="Dahlke C."/>
            <person name="Davenport L.B."/>
            <person name="Davies P."/>
            <person name="de Pablos B."/>
            <person name="Delcher A."/>
            <person name="Deng Z."/>
            <person name="Mays A.D."/>
            <person name="Dew I."/>
            <person name="Dietz S.M."/>
            <person name="Dodson K."/>
            <person name="Doup L.E."/>
            <person name="Downes M."/>
            <person name="Dugan-Rocha S."/>
            <person name="Dunkov B.C."/>
            <person name="Dunn P."/>
            <person name="Durbin K.J."/>
            <person name="Evangelista C.C."/>
            <person name="Ferraz C."/>
            <person name="Ferriera S."/>
            <person name="Fleischmann W."/>
            <person name="Fosler C."/>
            <person name="Gabrielian A.E."/>
            <person name="Garg N.S."/>
            <person name="Gelbart W.M."/>
            <person name="Glasser K."/>
            <person name="Glodek A."/>
            <person name="Gong F."/>
            <person name="Gorrell J.H."/>
            <person name="Gu Z."/>
            <person name="Guan P."/>
            <person name="Harris M."/>
            <person name="Harris N.L."/>
            <person name="Harvey D.A."/>
            <person name="Heiman T.J."/>
            <person name="Hernandez J.R."/>
            <person name="Houck J."/>
            <person name="Hostin D."/>
            <person name="Houston K.A."/>
            <person name="Howland T.J."/>
            <person name="Wei M.-H."/>
            <person name="Ibegwam C."/>
            <person name="Jalali M."/>
            <person name="Kalush F."/>
            <person name="Karpen G.H."/>
            <person name="Ke Z."/>
            <person name="Kennison J.A."/>
            <person name="Ketchum K.A."/>
            <person name="Kimmel B.E."/>
            <person name="Kodira C.D."/>
            <person name="Kraft C.L."/>
            <person name="Kravitz S."/>
            <person name="Kulp D."/>
            <person name="Lai Z."/>
            <person name="Lasko P."/>
            <person name="Lei Y."/>
            <person name="Levitsky A.A."/>
            <person name="Li J.H."/>
            <person name="Li Z."/>
            <person name="Liang Y."/>
            <person name="Lin X."/>
            <person name="Liu X."/>
            <person name="Mattei B."/>
            <person name="McIntosh T.C."/>
            <person name="McLeod M.P."/>
            <person name="McPherson D."/>
            <person name="Merkulov G."/>
            <person name="Milshina N.V."/>
            <person name="Mobarry C."/>
            <person name="Morris J."/>
            <person name="Moshrefi A."/>
            <person name="Mount S.M."/>
            <person name="Moy M."/>
            <person name="Murphy B."/>
            <person name="Murphy L."/>
            <person name="Muzny D.M."/>
            <person name="Nelson D.L."/>
            <person name="Nelson D.R."/>
            <person name="Nelson K.A."/>
            <person name="Nixon K."/>
            <person name="Nusskern D.R."/>
            <person name="Pacleb J.M."/>
            <person name="Palazzolo M."/>
            <person name="Pittman G.S."/>
            <person name="Pan S."/>
            <person name="Pollard J."/>
            <person name="Puri V."/>
            <person name="Reese M.G."/>
            <person name="Reinert K."/>
            <person name="Remington K."/>
            <person name="Saunders R.D.C."/>
            <person name="Scheeler F."/>
            <person name="Shen H."/>
            <person name="Shue B.C."/>
            <person name="Siden-Kiamos I."/>
            <person name="Simpson M."/>
            <person name="Skupski M.P."/>
            <person name="Smith T.J."/>
            <person name="Spier E."/>
            <person name="Spradling A.C."/>
            <person name="Stapleton M."/>
            <person name="Strong R."/>
            <person name="Sun E."/>
            <person name="Svirskas R."/>
            <person name="Tector C."/>
            <person name="Turner R."/>
            <person name="Venter E."/>
            <person name="Wang A.H."/>
            <person name="Wang X."/>
            <person name="Wang Z.-Y."/>
            <person name="Wassarman D.A."/>
            <person name="Weinstock G.M."/>
            <person name="Weissenbach J."/>
            <person name="Williams S.M."/>
            <person name="Woodage T."/>
            <person name="Worley K.C."/>
            <person name="Wu D."/>
            <person name="Yang S."/>
            <person name="Yao Q.A."/>
            <person name="Ye J."/>
            <person name="Yeh R.-F."/>
            <person name="Zaveri J.S."/>
            <person name="Zhan M."/>
            <person name="Zhang G."/>
            <person name="Zhao Q."/>
            <person name="Zheng L."/>
            <person name="Zheng X.H."/>
            <person name="Zhong F.N."/>
            <person name="Zhong W."/>
            <person name="Zhou X."/>
            <person name="Zhu S.C."/>
            <person name="Zhu X."/>
            <person name="Smith H.O."/>
            <person name="Gibbs R.A."/>
            <person name="Myers E.W."/>
            <person name="Rubin G.M."/>
            <person name="Venter J.C."/>
        </authorList>
    </citation>
    <scope>NUCLEOTIDE SEQUENCE [LARGE SCALE GENOMIC DNA]</scope>
    <source>
        <strain evidence="5">Berkeley</strain>
    </source>
</reference>
<reference key="3">
    <citation type="journal article" date="2002" name="Genome Biol.">
        <title>Annotation of the Drosophila melanogaster euchromatic genome: a systematic review.</title>
        <authorList>
            <person name="Misra S."/>
            <person name="Crosby M.A."/>
            <person name="Mungall C.J."/>
            <person name="Matthews B.B."/>
            <person name="Campbell K.S."/>
            <person name="Hradecky P."/>
            <person name="Huang Y."/>
            <person name="Kaminker J.S."/>
            <person name="Millburn G.H."/>
            <person name="Prochnik S.E."/>
            <person name="Smith C.D."/>
            <person name="Tupy J.L."/>
            <person name="Whitfield E.J."/>
            <person name="Bayraktaroglu L."/>
            <person name="Berman B.P."/>
            <person name="Bettencourt B.R."/>
            <person name="Celniker S.E."/>
            <person name="de Grey A.D.N.J."/>
            <person name="Drysdale R.A."/>
            <person name="Harris N.L."/>
            <person name="Richter J."/>
            <person name="Russo S."/>
            <person name="Schroeder A.J."/>
            <person name="Shu S.Q."/>
            <person name="Stapleton M."/>
            <person name="Yamada C."/>
            <person name="Ashburner M."/>
            <person name="Gelbart W.M."/>
            <person name="Rubin G.M."/>
            <person name="Lewis S.E."/>
        </authorList>
    </citation>
    <scope>GENOME REANNOTATION</scope>
    <source>
        <strain>Berkeley</strain>
    </source>
</reference>
<reference evidence="10" key="4">
    <citation type="journal article" date="2002" name="Genome Biol.">
        <title>A Drosophila full-length cDNA resource.</title>
        <authorList>
            <person name="Stapleton M."/>
            <person name="Carlson J.W."/>
            <person name="Brokstein P."/>
            <person name="Yu C."/>
            <person name="Champe M."/>
            <person name="George R.A."/>
            <person name="Guarin H."/>
            <person name="Kronmiller B."/>
            <person name="Pacleb J.M."/>
            <person name="Park S."/>
            <person name="Wan K.H."/>
            <person name="Rubin G.M."/>
            <person name="Celniker S.E."/>
        </authorList>
    </citation>
    <scope>NUCLEOTIDE SEQUENCE [LARGE SCALE MRNA]</scope>
    <source>
        <strain evidence="6">Berkeley</strain>
        <tissue evidence="6">Head</tissue>
    </source>
</reference>
<reference evidence="10" key="5">
    <citation type="journal article" date="1992" name="Genes Dev.">
        <title>Dual Bar homeo box genes of Drosophila required in two photoreceptor cells, R1 and R6, and primary pigment cells for normal eye development.</title>
        <authorList>
            <person name="Higashijima S."/>
            <person name="Kojima T."/>
            <person name="Michiue T."/>
            <person name="Ishimaru S."/>
            <person name="Emori Y."/>
            <person name="Saigo K."/>
        </authorList>
    </citation>
    <scope>FUNCTION</scope>
    <scope>TISSUE SPECIFICITY</scope>
    <scope>DEVELOPMENTAL STAGE</scope>
    <source>
        <strain evidence="7">Canton-S</strain>
    </source>
</reference>
<reference evidence="10" key="6">
    <citation type="journal article" date="1992" name="Genes Dev.">
        <title>Subtype determination of Drosophila embryonic external sensory organs by redundant homeo box genes BarH1 and BarH2.</title>
        <authorList>
            <person name="Higashijima S."/>
            <person name="Michiue T."/>
            <person name="Emori Y."/>
            <person name="Saigo K."/>
        </authorList>
    </citation>
    <scope>FUNCTION</scope>
    <scope>TISSUE SPECIFICITY</scope>
</reference>
<reference evidence="10" key="7">
    <citation type="journal article" date="1999" name="Development">
        <title>Bar homeobox genes are latitudinal prepattern genes in the developing Drosophila notum whose expression is regulated by the concerted functions of decapentaplegic and wingless.</title>
        <authorList>
            <person name="Sato M."/>
            <person name="Kojima T."/>
            <person name="Michiue T."/>
            <person name="Saigo K."/>
        </authorList>
    </citation>
    <scope>FUNCTION</scope>
    <scope>TISSUE SPECIFICITY</scope>
</reference>
<reference evidence="10" key="8">
    <citation type="journal article" date="2000" name="Development">
        <title>Formation and specification of distal leg segments in Drosophila by dual Bar homeobox genes, BarH1 and BarH2.</title>
        <authorList>
            <person name="Kojima T."/>
            <person name="Sato M."/>
            <person name="Saigo K."/>
        </authorList>
    </citation>
    <scope>FUNCTION</scope>
    <scope>TISSUE SPECIFICITY</scope>
</reference>
<proteinExistence type="evidence at transcript level"/>
<keyword id="KW-0217">Developmental protein</keyword>
<keyword id="KW-0238">DNA-binding</keyword>
<keyword id="KW-0371">Homeobox</keyword>
<keyword id="KW-0539">Nucleus</keyword>
<keyword id="KW-1185">Reference proteome</keyword>
<keyword id="KW-0716">Sensory transduction</keyword>
<keyword id="KW-0844">Vision</keyword>
<comment type="function">
    <text evidence="3 4 7 8">B-H1 and B-H2 are regulated by members of the wg signaling pathway; wg and dpp. B-H1 and B-H2 are coexpressed and functionally required in R1 and R6 receptor cells and primary pigment cells for normal eye development. Coexpression is also required for the fate determination of external sensory organs, formation of notal microchaetae, formation of presutural macrochaetae, antennal development and for distal leg morphogenesis; segmentation and specification of tarsal segments 3-5.</text>
</comment>
<comment type="subcellular location">
    <subcellularLocation>
        <location evidence="10">Nucleus</location>
    </subcellularLocation>
</comment>
<comment type="tissue specificity">
    <text evidence="3 4 7 8 9">B-H1 and B-H2 are abundant in the eye-antenna imaginal disk. Expressed in R1 and R6 cells throughout larval stage until 30 hours after puparium formation, at which time expression is seen in the anterior and posterior primary pigment cells. Coexpressed in embryonic glial cells, neurons of the CNS and PNS, most latitudinal anterior cells of the developing notum and the central circular region of the leg and antennal imaginal disk throughout larval development.</text>
</comment>
<comment type="developmental stage">
    <text evidence="7 9">Coexpressed at high levels with B-H1 in embryo and pupae and at low levels in larvae.</text>
</comment>
<comment type="similarity">
    <text evidence="10">Belongs to the Antp homeobox family.</text>
</comment>
<gene>
    <name type="primary">B-H1</name>
    <name type="synonym">barh1</name>
    <name type="ORF">CG5529</name>
</gene>